<dbReference type="EMBL" id="AP006627">
    <property type="protein sequence ID" value="BAD62717.1"/>
    <property type="molecule type" value="Genomic_DNA"/>
</dbReference>
<dbReference type="RefSeq" id="WP_003333770.1">
    <property type="nucleotide sequence ID" value="NC_006582.1"/>
</dbReference>
<dbReference type="SMR" id="Q5WLN8"/>
<dbReference type="STRING" id="66692.ABC0174"/>
<dbReference type="GeneID" id="98575693"/>
<dbReference type="KEGG" id="bcl:ABC0174"/>
<dbReference type="eggNOG" id="COG0257">
    <property type="taxonomic scope" value="Bacteria"/>
</dbReference>
<dbReference type="HOGENOM" id="CLU_135723_6_2_9"/>
<dbReference type="OrthoDB" id="9802520at2"/>
<dbReference type="Proteomes" id="UP000001168">
    <property type="component" value="Chromosome"/>
</dbReference>
<dbReference type="GO" id="GO:0005737">
    <property type="term" value="C:cytoplasm"/>
    <property type="evidence" value="ECO:0007669"/>
    <property type="project" value="UniProtKB-ARBA"/>
</dbReference>
<dbReference type="GO" id="GO:1990904">
    <property type="term" value="C:ribonucleoprotein complex"/>
    <property type="evidence" value="ECO:0007669"/>
    <property type="project" value="UniProtKB-KW"/>
</dbReference>
<dbReference type="GO" id="GO:0005840">
    <property type="term" value="C:ribosome"/>
    <property type="evidence" value="ECO:0007669"/>
    <property type="project" value="UniProtKB-KW"/>
</dbReference>
<dbReference type="GO" id="GO:0003735">
    <property type="term" value="F:structural constituent of ribosome"/>
    <property type="evidence" value="ECO:0007669"/>
    <property type="project" value="InterPro"/>
</dbReference>
<dbReference type="GO" id="GO:0006412">
    <property type="term" value="P:translation"/>
    <property type="evidence" value="ECO:0007669"/>
    <property type="project" value="UniProtKB-UniRule"/>
</dbReference>
<dbReference type="HAMAP" id="MF_00251">
    <property type="entry name" value="Ribosomal_bL36"/>
    <property type="match status" value="1"/>
</dbReference>
<dbReference type="InterPro" id="IPR000473">
    <property type="entry name" value="Ribosomal_bL36"/>
</dbReference>
<dbReference type="InterPro" id="IPR035977">
    <property type="entry name" value="Ribosomal_bL36_sp"/>
</dbReference>
<dbReference type="NCBIfam" id="TIGR01022">
    <property type="entry name" value="rpmJ_bact"/>
    <property type="match status" value="1"/>
</dbReference>
<dbReference type="PANTHER" id="PTHR42888">
    <property type="entry name" value="50S RIBOSOMAL PROTEIN L36, CHLOROPLASTIC"/>
    <property type="match status" value="1"/>
</dbReference>
<dbReference type="PANTHER" id="PTHR42888:SF1">
    <property type="entry name" value="LARGE RIBOSOMAL SUBUNIT PROTEIN BL36C"/>
    <property type="match status" value="1"/>
</dbReference>
<dbReference type="Pfam" id="PF00444">
    <property type="entry name" value="Ribosomal_L36"/>
    <property type="match status" value="1"/>
</dbReference>
<dbReference type="SUPFAM" id="SSF57840">
    <property type="entry name" value="Ribosomal protein L36"/>
    <property type="match status" value="1"/>
</dbReference>
<dbReference type="PROSITE" id="PS00828">
    <property type="entry name" value="RIBOSOMAL_L36"/>
    <property type="match status" value="1"/>
</dbReference>
<feature type="chain" id="PRO_0000126147" description="Large ribosomal subunit protein bL36">
    <location>
        <begin position="1"/>
        <end position="37"/>
    </location>
</feature>
<gene>
    <name evidence="1" type="primary">rpmJ</name>
    <name type="ordered locus">ABC0174</name>
</gene>
<reference key="1">
    <citation type="submission" date="2003-10" db="EMBL/GenBank/DDBJ databases">
        <title>The complete genome sequence of the alkaliphilic Bacillus clausii KSM-K16.</title>
        <authorList>
            <person name="Takaki Y."/>
            <person name="Kageyama Y."/>
            <person name="Shimamura S."/>
            <person name="Suzuki H."/>
            <person name="Nishi S."/>
            <person name="Hatada Y."/>
            <person name="Kawai S."/>
            <person name="Ito S."/>
            <person name="Horikoshi K."/>
        </authorList>
    </citation>
    <scope>NUCLEOTIDE SEQUENCE [LARGE SCALE GENOMIC DNA]</scope>
    <source>
        <strain>KSM-K16</strain>
    </source>
</reference>
<protein>
    <recommendedName>
        <fullName evidence="1">Large ribosomal subunit protein bL36</fullName>
    </recommendedName>
    <alternativeName>
        <fullName evidence="2">50S ribosomal protein L36</fullName>
    </alternativeName>
</protein>
<accession>Q5WLN8</accession>
<comment type="similarity">
    <text evidence="1">Belongs to the bacterial ribosomal protein bL36 family.</text>
</comment>
<name>RL36_SHOC1</name>
<sequence length="37" mass="4291">MKVRPSVKPICEKCKVIRRKGNVMVICENPKHKQKQG</sequence>
<proteinExistence type="inferred from homology"/>
<evidence type="ECO:0000255" key="1">
    <source>
        <dbReference type="HAMAP-Rule" id="MF_00251"/>
    </source>
</evidence>
<evidence type="ECO:0000305" key="2"/>
<organism>
    <name type="scientific">Shouchella clausii (strain KSM-K16)</name>
    <name type="common">Alkalihalobacillus clausii</name>
    <dbReference type="NCBI Taxonomy" id="66692"/>
    <lineage>
        <taxon>Bacteria</taxon>
        <taxon>Bacillati</taxon>
        <taxon>Bacillota</taxon>
        <taxon>Bacilli</taxon>
        <taxon>Bacillales</taxon>
        <taxon>Bacillaceae</taxon>
        <taxon>Shouchella</taxon>
    </lineage>
</organism>
<keyword id="KW-1185">Reference proteome</keyword>
<keyword id="KW-0687">Ribonucleoprotein</keyword>
<keyword id="KW-0689">Ribosomal protein</keyword>